<proteinExistence type="inferred from homology"/>
<gene>
    <name evidence="1" type="primary">rpmD</name>
    <name type="ordered locus">ASA_4069</name>
</gene>
<sequence>MANTVKVTQTRSSIGRLPKHKATLRGLGLRRIGHTVELEDTPCVRGMINQVYYMVKVEG</sequence>
<evidence type="ECO:0000255" key="1">
    <source>
        <dbReference type="HAMAP-Rule" id="MF_01371"/>
    </source>
</evidence>
<evidence type="ECO:0000305" key="2"/>
<name>RL30_AERS4</name>
<feature type="chain" id="PRO_0000347071" description="Large ribosomal subunit protein uL30">
    <location>
        <begin position="1"/>
        <end position="59"/>
    </location>
</feature>
<comment type="subunit">
    <text evidence="1">Part of the 50S ribosomal subunit.</text>
</comment>
<comment type="similarity">
    <text evidence="1">Belongs to the universal ribosomal protein uL30 family.</text>
</comment>
<keyword id="KW-0687">Ribonucleoprotein</keyword>
<keyword id="KW-0689">Ribosomal protein</keyword>
<dbReference type="EMBL" id="CP000644">
    <property type="protein sequence ID" value="ABO92010.1"/>
    <property type="molecule type" value="Genomic_DNA"/>
</dbReference>
<dbReference type="RefSeq" id="WP_005307985.1">
    <property type="nucleotide sequence ID" value="NC_009348.1"/>
</dbReference>
<dbReference type="SMR" id="A4SSY8"/>
<dbReference type="STRING" id="29491.GCA_000820065_03483"/>
<dbReference type="GeneID" id="97859418"/>
<dbReference type="KEGG" id="asa:ASA_4069"/>
<dbReference type="eggNOG" id="COG1841">
    <property type="taxonomic scope" value="Bacteria"/>
</dbReference>
<dbReference type="HOGENOM" id="CLU_131047_1_4_6"/>
<dbReference type="Proteomes" id="UP000000225">
    <property type="component" value="Chromosome"/>
</dbReference>
<dbReference type="GO" id="GO:0022625">
    <property type="term" value="C:cytosolic large ribosomal subunit"/>
    <property type="evidence" value="ECO:0007669"/>
    <property type="project" value="TreeGrafter"/>
</dbReference>
<dbReference type="GO" id="GO:0003735">
    <property type="term" value="F:structural constituent of ribosome"/>
    <property type="evidence" value="ECO:0007669"/>
    <property type="project" value="InterPro"/>
</dbReference>
<dbReference type="GO" id="GO:0006412">
    <property type="term" value="P:translation"/>
    <property type="evidence" value="ECO:0007669"/>
    <property type="project" value="UniProtKB-UniRule"/>
</dbReference>
<dbReference type="CDD" id="cd01658">
    <property type="entry name" value="Ribosomal_L30"/>
    <property type="match status" value="1"/>
</dbReference>
<dbReference type="FunFam" id="3.30.1390.20:FF:000001">
    <property type="entry name" value="50S ribosomal protein L30"/>
    <property type="match status" value="1"/>
</dbReference>
<dbReference type="Gene3D" id="3.30.1390.20">
    <property type="entry name" value="Ribosomal protein L30, ferredoxin-like fold domain"/>
    <property type="match status" value="1"/>
</dbReference>
<dbReference type="HAMAP" id="MF_01371_B">
    <property type="entry name" value="Ribosomal_uL30_B"/>
    <property type="match status" value="1"/>
</dbReference>
<dbReference type="InterPro" id="IPR036919">
    <property type="entry name" value="Ribo_uL30_ferredoxin-like_sf"/>
</dbReference>
<dbReference type="InterPro" id="IPR005996">
    <property type="entry name" value="Ribosomal_uL30_bac-type"/>
</dbReference>
<dbReference type="InterPro" id="IPR018038">
    <property type="entry name" value="Ribosomal_uL30_CS"/>
</dbReference>
<dbReference type="InterPro" id="IPR016082">
    <property type="entry name" value="Ribosomal_uL30_ferredoxin-like"/>
</dbReference>
<dbReference type="NCBIfam" id="TIGR01308">
    <property type="entry name" value="rpmD_bact"/>
    <property type="match status" value="1"/>
</dbReference>
<dbReference type="PANTHER" id="PTHR15892:SF2">
    <property type="entry name" value="LARGE RIBOSOMAL SUBUNIT PROTEIN UL30M"/>
    <property type="match status" value="1"/>
</dbReference>
<dbReference type="PANTHER" id="PTHR15892">
    <property type="entry name" value="MITOCHONDRIAL RIBOSOMAL PROTEIN L30"/>
    <property type="match status" value="1"/>
</dbReference>
<dbReference type="Pfam" id="PF00327">
    <property type="entry name" value="Ribosomal_L30"/>
    <property type="match status" value="1"/>
</dbReference>
<dbReference type="PIRSF" id="PIRSF002211">
    <property type="entry name" value="Ribosomal_L30_bac-type"/>
    <property type="match status" value="1"/>
</dbReference>
<dbReference type="SUPFAM" id="SSF55129">
    <property type="entry name" value="Ribosomal protein L30p/L7e"/>
    <property type="match status" value="1"/>
</dbReference>
<dbReference type="PROSITE" id="PS00634">
    <property type="entry name" value="RIBOSOMAL_L30"/>
    <property type="match status" value="1"/>
</dbReference>
<accession>A4SSY8</accession>
<organism>
    <name type="scientific">Aeromonas salmonicida (strain A449)</name>
    <dbReference type="NCBI Taxonomy" id="382245"/>
    <lineage>
        <taxon>Bacteria</taxon>
        <taxon>Pseudomonadati</taxon>
        <taxon>Pseudomonadota</taxon>
        <taxon>Gammaproteobacteria</taxon>
        <taxon>Aeromonadales</taxon>
        <taxon>Aeromonadaceae</taxon>
        <taxon>Aeromonas</taxon>
    </lineage>
</organism>
<reference key="1">
    <citation type="journal article" date="2008" name="BMC Genomics">
        <title>The genome of Aeromonas salmonicida subsp. salmonicida A449: insights into the evolution of a fish pathogen.</title>
        <authorList>
            <person name="Reith M.E."/>
            <person name="Singh R.K."/>
            <person name="Curtis B."/>
            <person name="Boyd J.M."/>
            <person name="Bouevitch A."/>
            <person name="Kimball J."/>
            <person name="Munholland J."/>
            <person name="Murphy C."/>
            <person name="Sarty D."/>
            <person name="Williams J."/>
            <person name="Nash J.H."/>
            <person name="Johnson S.C."/>
            <person name="Brown L.L."/>
        </authorList>
    </citation>
    <scope>NUCLEOTIDE SEQUENCE [LARGE SCALE GENOMIC DNA]</scope>
    <source>
        <strain>A449</strain>
    </source>
</reference>
<protein>
    <recommendedName>
        <fullName evidence="1">Large ribosomal subunit protein uL30</fullName>
    </recommendedName>
    <alternativeName>
        <fullName evidence="2">50S ribosomal protein L30</fullName>
    </alternativeName>
</protein>